<gene>
    <name evidence="2" type="primary">infB</name>
    <name type="ordered locus">MAE_14330</name>
</gene>
<keyword id="KW-0963">Cytoplasm</keyword>
<keyword id="KW-0342">GTP-binding</keyword>
<keyword id="KW-0396">Initiation factor</keyword>
<keyword id="KW-0547">Nucleotide-binding</keyword>
<keyword id="KW-0648">Protein biosynthesis</keyword>
<evidence type="ECO:0000250" key="1"/>
<evidence type="ECO:0000255" key="2">
    <source>
        <dbReference type="HAMAP-Rule" id="MF_00100"/>
    </source>
</evidence>
<evidence type="ECO:0000256" key="3">
    <source>
        <dbReference type="SAM" id="MobiDB-lite"/>
    </source>
</evidence>
<protein>
    <recommendedName>
        <fullName evidence="2">Translation initiation factor IF-2</fullName>
    </recommendedName>
</protein>
<sequence length="1010" mass="109510">MSNTKVRIYDLSKELNLDNKDILDICDQLNIEYKSHSSTISEEDAQRIKAIAAKGLASSTSKNSTGQRESASPAEEKKQKILALHKHNRPETGEEGESYPGQAGSSAKPTLISPPRPPVKPLVAPPGRDEAAEKTPPTAAEMLSHSPSVKETPTETPLVPEAAPTLIAPPNRPSLTPKPRPETASGRPEPRSKNAPGSNDRPRGEKRERGESENAPSPERRVGLAKPEKPTLNRKPDGKSPKLAEPAREVRETVELKRPVRPGLPAKISATSEEETDTTKKSGVDGTEIDTDTGLLGADGPKKLKRPTMPPRMAKKSTWEEEEEEEKKAAKTAKTAGKNKRRTQALFEDDDDLESELSGLINTPSFTLSTARPPKPPTAKAAPPGTPTAVKVKRPSKPTAHTGSPKSERQEPQEEKRPESIVVTGSLTVRDLSELMKVPETEIIRTLFFKGMAVNITQTLDVDTIEMIARDFEIAVETPSTQSAAIKTTEMIDVSDWESLQRRPPVVTIMGHVDHGKTTLLDSIRKTKVAQGEAGGITQHIGAYHVDVEHNGKPEQIVFLDTPGHEAFTAMRARGARVTDIAVLVVAADDGVQPQTKEAISHARAAEVPIVVAINKVDKPSANPDRIKQELTEQGLVAEDWGGETIMVPVSALRGENLDNLLEMILLVAEVEELVANPDRLAKGTVIEANLDRTKGPVATLLVQNGTLRVGDSIVAGSVFGKIRAMIDDRGQKVEAATPSFAVEILGLSDVPAAGDEFDVYESEKEARSIADQRAIERRNTRLQQALSSRRVSLSTLSIQAQEGQLKELNLILKADVQGSVEAILGALKQLPQNEVQIRVLLASPGEITETDVDLAAASGAVVVGFNTTLASGARASADREGVDIRDYNIIYKLLDDIQGAMEGLLDPEEVEEHLGFAEVRAVFTVGRGAVAGCYVQSGKLVRNRFLRVRRGKEIVYQGVLDSLKRMKEDAREVATGFECGVGVSKFNDWKEGDIIEAYEMVMKRRTLSS</sequence>
<comment type="function">
    <text evidence="2">One of the essential components for the initiation of protein synthesis. Protects formylmethionyl-tRNA from spontaneous hydrolysis and promotes its binding to the 30S ribosomal subunits. Also involved in the hydrolysis of GTP during the formation of the 70S ribosomal complex.</text>
</comment>
<comment type="subcellular location">
    <subcellularLocation>
        <location evidence="2">Cytoplasm</location>
    </subcellularLocation>
</comment>
<comment type="similarity">
    <text evidence="2">Belongs to the TRAFAC class translation factor GTPase superfamily. Classic translation factor GTPase family. IF-2 subfamily.</text>
</comment>
<feature type="chain" id="PRO_1000075608" description="Translation initiation factor IF-2">
    <location>
        <begin position="1"/>
        <end position="1010"/>
    </location>
</feature>
<feature type="domain" description="tr-type G">
    <location>
        <begin position="502"/>
        <end position="675"/>
    </location>
</feature>
<feature type="region of interest" description="Disordered" evidence="3">
    <location>
        <begin position="54"/>
        <end position="350"/>
    </location>
</feature>
<feature type="region of interest" description="Disordered" evidence="3">
    <location>
        <begin position="364"/>
        <end position="420"/>
    </location>
</feature>
<feature type="region of interest" description="G1" evidence="1">
    <location>
        <begin position="511"/>
        <end position="518"/>
    </location>
</feature>
<feature type="region of interest" description="G2" evidence="1">
    <location>
        <begin position="536"/>
        <end position="540"/>
    </location>
</feature>
<feature type="region of interest" description="G3" evidence="1">
    <location>
        <begin position="561"/>
        <end position="564"/>
    </location>
</feature>
<feature type="region of interest" description="G4" evidence="1">
    <location>
        <begin position="615"/>
        <end position="618"/>
    </location>
</feature>
<feature type="region of interest" description="G5" evidence="1">
    <location>
        <begin position="651"/>
        <end position="653"/>
    </location>
</feature>
<feature type="compositionally biased region" description="Polar residues" evidence="3">
    <location>
        <begin position="57"/>
        <end position="70"/>
    </location>
</feature>
<feature type="compositionally biased region" description="Pro residues" evidence="3">
    <location>
        <begin position="112"/>
        <end position="124"/>
    </location>
</feature>
<feature type="compositionally biased region" description="Polar residues" evidence="3">
    <location>
        <begin position="145"/>
        <end position="155"/>
    </location>
</feature>
<feature type="compositionally biased region" description="Basic and acidic residues" evidence="3">
    <location>
        <begin position="200"/>
        <end position="258"/>
    </location>
</feature>
<feature type="compositionally biased region" description="Low complexity" evidence="3">
    <location>
        <begin position="378"/>
        <end position="389"/>
    </location>
</feature>
<feature type="compositionally biased region" description="Basic and acidic residues" evidence="3">
    <location>
        <begin position="406"/>
        <end position="419"/>
    </location>
</feature>
<feature type="binding site" evidence="2">
    <location>
        <begin position="511"/>
        <end position="518"/>
    </location>
    <ligand>
        <name>GTP</name>
        <dbReference type="ChEBI" id="CHEBI:37565"/>
    </ligand>
</feature>
<feature type="binding site" evidence="2">
    <location>
        <begin position="561"/>
        <end position="565"/>
    </location>
    <ligand>
        <name>GTP</name>
        <dbReference type="ChEBI" id="CHEBI:37565"/>
    </ligand>
</feature>
<feature type="binding site" evidence="2">
    <location>
        <begin position="615"/>
        <end position="618"/>
    </location>
    <ligand>
        <name>GTP</name>
        <dbReference type="ChEBI" id="CHEBI:37565"/>
    </ligand>
</feature>
<accession>B0JU67</accession>
<organism>
    <name type="scientific">Microcystis aeruginosa (strain NIES-843 / IAM M-2473)</name>
    <dbReference type="NCBI Taxonomy" id="449447"/>
    <lineage>
        <taxon>Bacteria</taxon>
        <taxon>Bacillati</taxon>
        <taxon>Cyanobacteriota</taxon>
        <taxon>Cyanophyceae</taxon>
        <taxon>Oscillatoriophycideae</taxon>
        <taxon>Chroococcales</taxon>
        <taxon>Microcystaceae</taxon>
        <taxon>Microcystis</taxon>
    </lineage>
</organism>
<reference key="1">
    <citation type="journal article" date="2007" name="DNA Res.">
        <title>Complete genomic structure of the bloom-forming toxic cyanobacterium Microcystis aeruginosa NIES-843.</title>
        <authorList>
            <person name="Kaneko T."/>
            <person name="Nakajima N."/>
            <person name="Okamoto S."/>
            <person name="Suzuki I."/>
            <person name="Tanabe Y."/>
            <person name="Tamaoki M."/>
            <person name="Nakamura Y."/>
            <person name="Kasai F."/>
            <person name="Watanabe A."/>
            <person name="Kawashima K."/>
            <person name="Kishida Y."/>
            <person name="Ono A."/>
            <person name="Shimizu Y."/>
            <person name="Takahashi C."/>
            <person name="Minami C."/>
            <person name="Fujishiro T."/>
            <person name="Kohara M."/>
            <person name="Katoh M."/>
            <person name="Nakazaki N."/>
            <person name="Nakayama S."/>
            <person name="Yamada M."/>
            <person name="Tabata S."/>
            <person name="Watanabe M.M."/>
        </authorList>
    </citation>
    <scope>NUCLEOTIDE SEQUENCE [LARGE SCALE GENOMIC DNA]</scope>
    <source>
        <strain>NIES-843 / IAM M-247</strain>
    </source>
</reference>
<dbReference type="EMBL" id="AP009552">
    <property type="protein sequence ID" value="BAG01255.1"/>
    <property type="molecule type" value="Genomic_DNA"/>
</dbReference>
<dbReference type="RefSeq" id="WP_012264842.1">
    <property type="nucleotide sequence ID" value="NC_010296.1"/>
</dbReference>
<dbReference type="SMR" id="B0JU67"/>
<dbReference type="STRING" id="449447.MAE_14330"/>
<dbReference type="PaxDb" id="449447-MAE_14330"/>
<dbReference type="EnsemblBacteria" id="BAG01255">
    <property type="protein sequence ID" value="BAG01255"/>
    <property type="gene ID" value="MAE_14330"/>
</dbReference>
<dbReference type="KEGG" id="mar:MAE_14330"/>
<dbReference type="PATRIC" id="fig|449447.4.peg.1314"/>
<dbReference type="eggNOG" id="COG0532">
    <property type="taxonomic scope" value="Bacteria"/>
</dbReference>
<dbReference type="eggNOG" id="COG3170">
    <property type="taxonomic scope" value="Bacteria"/>
</dbReference>
<dbReference type="HOGENOM" id="CLU_006301_5_1_3"/>
<dbReference type="BioCyc" id="MAER449447:MAE_RS06305-MONOMER"/>
<dbReference type="Proteomes" id="UP000001510">
    <property type="component" value="Chromosome"/>
</dbReference>
<dbReference type="GO" id="GO:0005829">
    <property type="term" value="C:cytosol"/>
    <property type="evidence" value="ECO:0007669"/>
    <property type="project" value="TreeGrafter"/>
</dbReference>
<dbReference type="GO" id="GO:0005525">
    <property type="term" value="F:GTP binding"/>
    <property type="evidence" value="ECO:0007669"/>
    <property type="project" value="UniProtKB-KW"/>
</dbReference>
<dbReference type="GO" id="GO:0003924">
    <property type="term" value="F:GTPase activity"/>
    <property type="evidence" value="ECO:0007669"/>
    <property type="project" value="UniProtKB-UniRule"/>
</dbReference>
<dbReference type="GO" id="GO:0003743">
    <property type="term" value="F:translation initiation factor activity"/>
    <property type="evidence" value="ECO:0007669"/>
    <property type="project" value="UniProtKB-UniRule"/>
</dbReference>
<dbReference type="CDD" id="cd01887">
    <property type="entry name" value="IF2_eIF5B"/>
    <property type="match status" value="1"/>
</dbReference>
<dbReference type="CDD" id="cd03702">
    <property type="entry name" value="IF2_mtIF2_II"/>
    <property type="match status" value="1"/>
</dbReference>
<dbReference type="CDD" id="cd03692">
    <property type="entry name" value="mtIF2_IVc"/>
    <property type="match status" value="1"/>
</dbReference>
<dbReference type="FunFam" id="2.40.30.10:FF:000007">
    <property type="entry name" value="Translation initiation factor IF-2"/>
    <property type="match status" value="1"/>
</dbReference>
<dbReference type="FunFam" id="2.40.30.10:FF:000008">
    <property type="entry name" value="Translation initiation factor IF-2"/>
    <property type="match status" value="1"/>
</dbReference>
<dbReference type="FunFam" id="3.40.50.10050:FF:000001">
    <property type="entry name" value="Translation initiation factor IF-2"/>
    <property type="match status" value="1"/>
</dbReference>
<dbReference type="FunFam" id="3.40.50.300:FF:000019">
    <property type="entry name" value="Translation initiation factor IF-2"/>
    <property type="match status" value="1"/>
</dbReference>
<dbReference type="Gene3D" id="1.10.10.2480">
    <property type="match status" value="1"/>
</dbReference>
<dbReference type="Gene3D" id="3.40.50.300">
    <property type="entry name" value="P-loop containing nucleotide triphosphate hydrolases"/>
    <property type="match status" value="1"/>
</dbReference>
<dbReference type="Gene3D" id="2.40.30.10">
    <property type="entry name" value="Translation factors"/>
    <property type="match status" value="2"/>
</dbReference>
<dbReference type="Gene3D" id="3.40.50.10050">
    <property type="entry name" value="Translation initiation factor IF- 2, domain 3"/>
    <property type="match status" value="1"/>
</dbReference>
<dbReference type="HAMAP" id="MF_00100_B">
    <property type="entry name" value="IF_2_B"/>
    <property type="match status" value="1"/>
</dbReference>
<dbReference type="InterPro" id="IPR053905">
    <property type="entry name" value="EF-G-like_DII"/>
</dbReference>
<dbReference type="InterPro" id="IPR044145">
    <property type="entry name" value="IF2_II"/>
</dbReference>
<dbReference type="InterPro" id="IPR006847">
    <property type="entry name" value="IF2_N"/>
</dbReference>
<dbReference type="InterPro" id="IPR027417">
    <property type="entry name" value="P-loop_NTPase"/>
</dbReference>
<dbReference type="InterPro" id="IPR005225">
    <property type="entry name" value="Small_GTP-bd"/>
</dbReference>
<dbReference type="InterPro" id="IPR000795">
    <property type="entry name" value="T_Tr_GTP-bd_dom"/>
</dbReference>
<dbReference type="InterPro" id="IPR000178">
    <property type="entry name" value="TF_IF2_bacterial-like"/>
</dbReference>
<dbReference type="InterPro" id="IPR015760">
    <property type="entry name" value="TIF_IF2"/>
</dbReference>
<dbReference type="InterPro" id="IPR023115">
    <property type="entry name" value="TIF_IF2_dom3"/>
</dbReference>
<dbReference type="InterPro" id="IPR036925">
    <property type="entry name" value="TIF_IF2_dom3_sf"/>
</dbReference>
<dbReference type="InterPro" id="IPR009000">
    <property type="entry name" value="Transl_B-barrel_sf"/>
</dbReference>
<dbReference type="NCBIfam" id="TIGR00487">
    <property type="entry name" value="IF-2"/>
    <property type="match status" value="1"/>
</dbReference>
<dbReference type="NCBIfam" id="TIGR00231">
    <property type="entry name" value="small_GTP"/>
    <property type="match status" value="1"/>
</dbReference>
<dbReference type="PANTHER" id="PTHR43381:SF5">
    <property type="entry name" value="TR-TYPE G DOMAIN-CONTAINING PROTEIN"/>
    <property type="match status" value="1"/>
</dbReference>
<dbReference type="PANTHER" id="PTHR43381">
    <property type="entry name" value="TRANSLATION INITIATION FACTOR IF-2-RELATED"/>
    <property type="match status" value="1"/>
</dbReference>
<dbReference type="Pfam" id="PF22042">
    <property type="entry name" value="EF-G_D2"/>
    <property type="match status" value="1"/>
</dbReference>
<dbReference type="Pfam" id="PF00009">
    <property type="entry name" value="GTP_EFTU"/>
    <property type="match status" value="1"/>
</dbReference>
<dbReference type="Pfam" id="PF11987">
    <property type="entry name" value="IF-2"/>
    <property type="match status" value="1"/>
</dbReference>
<dbReference type="Pfam" id="PF04760">
    <property type="entry name" value="IF2_N"/>
    <property type="match status" value="2"/>
</dbReference>
<dbReference type="PRINTS" id="PR00315">
    <property type="entry name" value="ELONGATNFCT"/>
</dbReference>
<dbReference type="SUPFAM" id="SSF52156">
    <property type="entry name" value="Initiation factor IF2/eIF5b, domain 3"/>
    <property type="match status" value="1"/>
</dbReference>
<dbReference type="SUPFAM" id="SSF52540">
    <property type="entry name" value="P-loop containing nucleoside triphosphate hydrolases"/>
    <property type="match status" value="1"/>
</dbReference>
<dbReference type="SUPFAM" id="SSF50447">
    <property type="entry name" value="Translation proteins"/>
    <property type="match status" value="2"/>
</dbReference>
<dbReference type="PROSITE" id="PS51722">
    <property type="entry name" value="G_TR_2"/>
    <property type="match status" value="1"/>
</dbReference>
<dbReference type="PROSITE" id="PS01176">
    <property type="entry name" value="IF2"/>
    <property type="match status" value="1"/>
</dbReference>
<name>IF2_MICAN</name>
<proteinExistence type="inferred from homology"/>